<organism>
    <name type="scientific">Geobacillus stearothermophilus</name>
    <name type="common">Bacillus stearothermophilus</name>
    <dbReference type="NCBI Taxonomy" id="1422"/>
    <lineage>
        <taxon>Bacteria</taxon>
        <taxon>Bacillati</taxon>
        <taxon>Bacillota</taxon>
        <taxon>Bacilli</taxon>
        <taxon>Bacillales</taxon>
        <taxon>Anoxybacillaceae</taxon>
        <taxon>Geobacillus</taxon>
    </lineage>
</organism>
<sequence>MELFKYMETYDYEQVLFCQDKESGLKAIIAIHDTTLGPALGGTRMWMYNSEEEALEDALRLARGMTYKNAAAGLNLGGGKTVIIGDPRKDKNEAMFRAFGRFIQGLNGRYITAEDVGTTVADMDIIYQETDYVTGISPEFGSSGNPSPATAYGVYRGMKAAAKEAFGSDSLEGKVVAVQGVGNVAYHLCRHLHEEGAKLIVTDINKEVVARAVEEFGAKAVDPNDIYGVECDIFAPCALGGIINDQTIPQLKAKVIAGSADNQLKEPRHGDIIHEMGIVYAPDYVINAGGVINVADELYGYNRERAMKKIEQIYDNIEKVFAIAKRDNIPTYVAADRMAEERIETMRKARSPFLQNGHHILSRRRAR</sequence>
<dbReference type="EC" id="1.4.1.9"/>
<dbReference type="EMBL" id="M22977">
    <property type="protein sequence ID" value="AAA22570.1"/>
    <property type="status" value="ALT_FRAME"/>
    <property type="molecule type" value="Genomic_DNA"/>
</dbReference>
<dbReference type="EMBL" id="AB103384">
    <property type="protein sequence ID" value="BAC81829.1"/>
    <property type="molecule type" value="Genomic_DNA"/>
</dbReference>
<dbReference type="PIR" id="A31950">
    <property type="entry name" value="A31950"/>
</dbReference>
<dbReference type="SMR" id="P13154"/>
<dbReference type="BRENDA" id="1.4.1.9">
    <property type="organism ID" value="623"/>
</dbReference>
<dbReference type="UniPathway" id="UPA00363">
    <property type="reaction ID" value="UER00858"/>
</dbReference>
<dbReference type="GO" id="GO:0050049">
    <property type="term" value="F:L-leucine dehydrogenase activity"/>
    <property type="evidence" value="ECO:0007669"/>
    <property type="project" value="UniProtKB-EC"/>
</dbReference>
<dbReference type="GO" id="GO:0006552">
    <property type="term" value="P:L-leucine catabolic process"/>
    <property type="evidence" value="ECO:0007669"/>
    <property type="project" value="UniProtKB-UniPathway"/>
</dbReference>
<dbReference type="CDD" id="cd01075">
    <property type="entry name" value="NAD_bind_Leu_Phe_Val_DH"/>
    <property type="match status" value="1"/>
</dbReference>
<dbReference type="FunFam" id="3.40.50.10860:FF:000010">
    <property type="entry name" value="Leucine dehydrogenase"/>
    <property type="match status" value="1"/>
</dbReference>
<dbReference type="FunFam" id="3.40.50.720:FF:000196">
    <property type="entry name" value="Leucine dehydrogenase"/>
    <property type="match status" value="1"/>
</dbReference>
<dbReference type="Gene3D" id="3.40.50.10860">
    <property type="entry name" value="Leucine Dehydrogenase, chain A, domain 1"/>
    <property type="match status" value="1"/>
</dbReference>
<dbReference type="Gene3D" id="3.40.50.720">
    <property type="entry name" value="NAD(P)-binding Rossmann-like Domain"/>
    <property type="match status" value="1"/>
</dbReference>
<dbReference type="InterPro" id="IPR046346">
    <property type="entry name" value="Aminoacid_DH-like_N_sf"/>
</dbReference>
<dbReference type="InterPro" id="IPR006095">
    <property type="entry name" value="Glu/Leu/Phe/Val/Trp_DH"/>
</dbReference>
<dbReference type="InterPro" id="IPR006096">
    <property type="entry name" value="Glu/Leu/Phe/Val/Trp_DH_C"/>
</dbReference>
<dbReference type="InterPro" id="IPR006097">
    <property type="entry name" value="Glu/Leu/Phe/Val/Trp_DH_dimer"/>
</dbReference>
<dbReference type="InterPro" id="IPR033524">
    <property type="entry name" value="Glu/Leu/Phe/Val_DH_AS"/>
</dbReference>
<dbReference type="InterPro" id="IPR016211">
    <property type="entry name" value="Glu/Phe/Leu/Val/Trp_DH_bac/arc"/>
</dbReference>
<dbReference type="InterPro" id="IPR036291">
    <property type="entry name" value="NAD(P)-bd_dom_sf"/>
</dbReference>
<dbReference type="PANTHER" id="PTHR42722">
    <property type="entry name" value="LEUCINE DEHYDROGENASE"/>
    <property type="match status" value="1"/>
</dbReference>
<dbReference type="PANTHER" id="PTHR42722:SF1">
    <property type="entry name" value="VALINE DEHYDROGENASE"/>
    <property type="match status" value="1"/>
</dbReference>
<dbReference type="Pfam" id="PF00208">
    <property type="entry name" value="ELFV_dehydrog"/>
    <property type="match status" value="2"/>
</dbReference>
<dbReference type="Pfam" id="PF02812">
    <property type="entry name" value="ELFV_dehydrog_N"/>
    <property type="match status" value="1"/>
</dbReference>
<dbReference type="PIRSF" id="PIRSF000188">
    <property type="entry name" value="Phe_leu_dh"/>
    <property type="match status" value="1"/>
</dbReference>
<dbReference type="PRINTS" id="PR00082">
    <property type="entry name" value="GLFDHDRGNASE"/>
</dbReference>
<dbReference type="SMART" id="SM00839">
    <property type="entry name" value="ELFV_dehydrog"/>
    <property type="match status" value="1"/>
</dbReference>
<dbReference type="SUPFAM" id="SSF53223">
    <property type="entry name" value="Aminoacid dehydrogenase-like, N-terminal domain"/>
    <property type="match status" value="1"/>
</dbReference>
<dbReference type="SUPFAM" id="SSF51735">
    <property type="entry name" value="NAD(P)-binding Rossmann-fold domains"/>
    <property type="match status" value="1"/>
</dbReference>
<dbReference type="PROSITE" id="PS00074">
    <property type="entry name" value="GLFV_DEHYDROGENASE"/>
    <property type="match status" value="1"/>
</dbReference>
<comment type="function">
    <text evidence="5">Catalyzes the reversible deamination of L-leucine to 4-methyl-2-oxopentanoate.</text>
</comment>
<comment type="catalytic activity">
    <reaction evidence="5">
        <text>L-leucine + NAD(+) + H2O = 4-methyl-2-oxopentanoate + NH4(+) + NADH + H(+)</text>
        <dbReference type="Rhea" id="RHEA:12220"/>
        <dbReference type="ChEBI" id="CHEBI:15377"/>
        <dbReference type="ChEBI" id="CHEBI:15378"/>
        <dbReference type="ChEBI" id="CHEBI:17865"/>
        <dbReference type="ChEBI" id="CHEBI:28938"/>
        <dbReference type="ChEBI" id="CHEBI:57427"/>
        <dbReference type="ChEBI" id="CHEBI:57540"/>
        <dbReference type="ChEBI" id="CHEBI:57945"/>
        <dbReference type="EC" id="1.4.1.9"/>
    </reaction>
</comment>
<comment type="pathway">
    <text>Amino-acid degradation; L-leucine degradation; 4-methyl-2-oxopentanoate from L-leucine (dehydrogenase route): step 1/1.</text>
</comment>
<comment type="subunit">
    <text evidence="5">Homohexamer.</text>
</comment>
<comment type="biotechnology">
    <text evidence="4">This enzyme has been successfully altered through several rounds of protein engineering to an enantioselective amine dehydrogenase. Instead of the wild-type alpha-keto acid, the new amine dehydrogenase now accepts the analogous ketone, methyl isobutyl ketone (MIBK), which corresponds to exchange of the carboxy group by a methyl group, to produce chiral (R)-1,3-dimethylbutylamine via a reductive amination reaction. This represents a suitable enzymatic production route for the asymmetric synthesis of amines from prochiral ketones and free ammonia, which is one of the top aspirational reactions challenging the pharmaceutical industry.</text>
</comment>
<comment type="similarity">
    <text evidence="6">Belongs to the Glu/Leu/Phe/Val dehydrogenases family.</text>
</comment>
<comment type="sequence caution" evidence="6">
    <conflict type="frameshift">
        <sequence resource="EMBL-CDS" id="AAA22570"/>
    </conflict>
</comment>
<reference key="1">
    <citation type="journal article" date="1988" name="Biochemistry">
        <title>Gene cloning and sequence determination of leucine dehydrogenase from Bacillus stearothermophilus and structural comparison with other NAD(P)+-dependent dehydrogenases.</title>
        <authorList>
            <person name="Nagata S."/>
            <person name="Tanizawa K."/>
            <person name="Esaki N."/>
            <person name="Sakamoto Y."/>
            <person name="Ohshima T."/>
            <person name="Tanaka H."/>
            <person name="Soda K."/>
        </authorList>
    </citation>
    <scope>NUCLEOTIDE SEQUENCE [GENOMIC DNA]</scope>
    <scope>PARTIAL PROTEIN SEQUENCE</scope>
    <scope>FUNCTION</scope>
    <scope>CATALYTIC ACTIVITY</scope>
    <scope>SUBUNIT</scope>
    <source>
        <strain>ATCC 12980 / DSM 22 / CCM 2062 / JCM 2501 / NBRC 12550 / NCIMB 8923 / NCTC 10339 / R-35646 / VKM B-510</strain>
    </source>
</reference>
<reference key="2">
    <citation type="submission" date="2003-02" db="EMBL/GenBank/DDBJ databases">
        <title>Nucleotide sequence, cloning, overexpression and site-directed mutagenesis of the leucine dehydrogenase gene from Bacillus sphaericus.</title>
        <authorList>
            <person name="Katoh R."/>
            <person name="Seki M."/>
            <person name="Nagata S."/>
            <person name="Misono H."/>
        </authorList>
    </citation>
    <scope>NUCLEOTIDE SEQUENCE [GENOMIC DNA]</scope>
</reference>
<reference key="3">
    <citation type="journal article" date="1992" name="J. Biochem.">
        <title>Leucine dehydrogenase from Bacillus stearothermophilus: identification of active-site lysine by modification with pyridoxal phosphate.</title>
        <authorList>
            <person name="Matsuyama T."/>
            <person name="Soda K."/>
            <person name="Fukui T."/>
            <person name="Tanizawa K."/>
        </authorList>
    </citation>
    <scope>ACTIVE SITE LYS-80</scope>
</reference>
<reference key="4">
    <citation type="journal article" date="2012" name="Angew. Chem. Int. Ed.">
        <title>Development of an amine dehydrogenase for synthesis of chiral amines.</title>
        <authorList>
            <person name="Abrahamson M.J."/>
            <person name="Vazquez-Figueroa E."/>
            <person name="Woodall N.B."/>
            <person name="Moore J.C."/>
            <person name="Bommarius A.S."/>
        </authorList>
    </citation>
    <scope>MUTAGENESIS OF LYS-68; GLU-114; ASP-261 AND VAL-291</scope>
    <scope>BIOTECHNOLOGY</scope>
</reference>
<accession>P13154</accession>
<accession>Q76GN7</accession>
<name>DHLE_GEOSE</name>
<evidence type="ECO:0000255" key="1"/>
<evidence type="ECO:0000255" key="2">
    <source>
        <dbReference type="PROSITE-ProRule" id="PRU10011"/>
    </source>
</evidence>
<evidence type="ECO:0000269" key="3">
    <source>
    </source>
</evidence>
<evidence type="ECO:0000269" key="4">
    <source>
    </source>
</evidence>
<evidence type="ECO:0000269" key="5">
    <source>
    </source>
</evidence>
<evidence type="ECO:0000305" key="6"/>
<feature type="chain" id="PRO_0000182803" description="Leucine dehydrogenase">
    <location>
        <begin position="1"/>
        <end position="367"/>
    </location>
</feature>
<feature type="active site" evidence="2 3">
    <location>
        <position position="80"/>
    </location>
</feature>
<feature type="binding site" evidence="1">
    <location>
        <begin position="180"/>
        <end position="186"/>
    </location>
    <ligand>
        <name>NAD(+)</name>
        <dbReference type="ChEBI" id="CHEBI:57540"/>
    </ligand>
</feature>
<feature type="mutagenesis site" description="Completely modifies the activity of the enzyme, which is able to catalyze the reductive amination of ketones, and no longer displays leucine dehydrogenase activity; when associated with V-114, C-261 and C-291." evidence="4">
    <original>K</original>
    <variation>S</variation>
    <location>
        <position position="68"/>
    </location>
</feature>
<feature type="mutagenesis site" description="Completely modifies the activity of the enzyme, which is able to catalyze the reductive amination of ketones, and no longer displays leucine dehydrogenase activity; when associated with S-68, C-261 and C-291." evidence="4">
    <original>E</original>
    <variation>V</variation>
    <location>
        <position position="114"/>
    </location>
</feature>
<feature type="mutagenesis site" description="Completely modifies the activity of the enzyme, which is able to catalyze the reductive amination of ketones, and no longer displays leucine dehydrogenase activity; when associated with S-68, V-114 and C-291." evidence="4">
    <original>D</original>
    <variation>C</variation>
    <location>
        <position position="261"/>
    </location>
</feature>
<feature type="mutagenesis site" description="Completely modifies the activity of the enzyme, which is able to catalyze the reductive amination of ketones, and no longer displays leucine dehydrogenase activity; when associated with S-68, V-114 and C-261." evidence="4">
    <original>V</original>
    <variation>C</variation>
    <location>
        <position position="291"/>
    </location>
</feature>
<feature type="sequence conflict" description="In Ref. 1; AAA22570." evidence="6" ref="1">
    <original>RSP</original>
    <variation>ASQ</variation>
    <location>
        <begin position="350"/>
        <end position="352"/>
    </location>
</feature>
<proteinExistence type="evidence at protein level"/>
<keyword id="KW-0101">Branched-chain amino acid catabolism</keyword>
<keyword id="KW-0903">Direct protein sequencing</keyword>
<keyword id="KW-0520">NAD</keyword>
<keyword id="KW-0560">Oxidoreductase</keyword>
<protein>
    <recommendedName>
        <fullName>Leucine dehydrogenase</fullName>
        <shortName>LeuDH</shortName>
        <ecNumber>1.4.1.9</ecNumber>
    </recommendedName>
</protein>
<gene>
    <name type="primary">ldh</name>
    <name type="synonym">leuDH</name>
</gene>